<keyword id="KW-0120">Carbon dioxide fixation</keyword>
<keyword id="KW-0456">Lyase</keyword>
<keyword id="KW-0460">Magnesium</keyword>
<name>CAPP_EDWI9</name>
<reference key="1">
    <citation type="submission" date="2009-03" db="EMBL/GenBank/DDBJ databases">
        <title>Complete genome sequence of Edwardsiella ictaluri 93-146.</title>
        <authorList>
            <person name="Williams M.L."/>
            <person name="Gillaspy A.F."/>
            <person name="Dyer D.W."/>
            <person name="Thune R.L."/>
            <person name="Waldbieser G.C."/>
            <person name="Schuster S.C."/>
            <person name="Gipson J."/>
            <person name="Zaitshik J."/>
            <person name="Landry C."/>
            <person name="Lawrence M.L."/>
        </authorList>
    </citation>
    <scope>NUCLEOTIDE SEQUENCE [LARGE SCALE GENOMIC DNA]</scope>
    <source>
        <strain>93-146</strain>
    </source>
</reference>
<proteinExistence type="inferred from homology"/>
<gene>
    <name evidence="1" type="primary">ppc</name>
    <name type="ordered locus">NT01EI_3850</name>
</gene>
<feature type="chain" id="PRO_1000212177" description="Phosphoenolpyruvate carboxylase">
    <location>
        <begin position="1"/>
        <end position="877"/>
    </location>
</feature>
<feature type="active site" evidence="1">
    <location>
        <position position="137"/>
    </location>
</feature>
<feature type="active site" evidence="1">
    <location>
        <position position="544"/>
    </location>
</feature>
<comment type="function">
    <text evidence="1">Forms oxaloacetate, a four-carbon dicarboxylic acid source for the tricarboxylic acid cycle.</text>
</comment>
<comment type="catalytic activity">
    <reaction evidence="1">
        <text>oxaloacetate + phosphate = phosphoenolpyruvate + hydrogencarbonate</text>
        <dbReference type="Rhea" id="RHEA:28370"/>
        <dbReference type="ChEBI" id="CHEBI:16452"/>
        <dbReference type="ChEBI" id="CHEBI:17544"/>
        <dbReference type="ChEBI" id="CHEBI:43474"/>
        <dbReference type="ChEBI" id="CHEBI:58702"/>
        <dbReference type="EC" id="4.1.1.31"/>
    </reaction>
</comment>
<comment type="cofactor">
    <cofactor evidence="1">
        <name>Mg(2+)</name>
        <dbReference type="ChEBI" id="CHEBI:18420"/>
    </cofactor>
</comment>
<comment type="similarity">
    <text evidence="1">Belongs to the PEPCase type 1 family.</text>
</comment>
<protein>
    <recommendedName>
        <fullName evidence="1">Phosphoenolpyruvate carboxylase</fullName>
        <shortName evidence="1">PEPC</shortName>
        <shortName evidence="1">PEPCase</shortName>
        <ecNumber evidence="1">4.1.1.31</ecNumber>
    </recommendedName>
</protein>
<accession>C5BC63</accession>
<sequence>MNEQYSAMRGNVSMLGKLLGDTIKDALGEEILDRVETIRRLSKSSRAGNEASRQALLNTLQNLSNDELLPVARAFSQFLNLANVAEQYHRISPHGEAASNPDALYHLFTRLKNKNLDEAQIRQAVDNLSIELVLTAHPTEIARRTLIHKLVEVNTCLSQLDHDDLADYERHQIMRRLRQLVAQSWHTDEIRKNRPTPIDEAKWGYAVVENSLWEGVPAFLREFNEQLEKSLGYQLPVEAVPVRFTAWMGGDRDGNPNVTAEVTRRALLLSRWKAAELFLRDVQVLVSELSMTVCTPELRALAGEHTQEPYREVLKRLRQQLNNTLTYLDARLRGERLPRPADLLVSNDQLWQPLHTCYRSLKACGMGIIANGQLLDTLRRVHCFGVPLVRIDIRQESTRHTEALAELTRYLGLGDYETWSEEDKQTFLLRELNSKRPLVPRHWTPSPETKEVFDTCQVIAEAPAGAIAAYVISMARTPSDVLAVHLLLKEAGCPYNLPVVPLFETLDDLNNAEAVMTQLLSIDWYRGFIQGKQMVMIGYSDSAKDAGVMAASWAQYRAQEALVRVCDNAGIALTLFHGRGGSIGRGGAPAHDALLSQPPGSLKSGLRVTEQGEMIRFKLGLPEIAVSSLTLYTSAILEANLLPPPAPKQEWRDVMDELSQTSCALYRRYIRKNPDFVPYFRSATPELELGKLPLGSRPAKRRPSGGVESLRAIPWIFAWTQNRLMLPAWLGAGTALEEAMTEGHRGTLENMYRSWPFFTTRIDMLEMVFAKSDLWLAEYYDQRLVDPALWPLGTELRQQVQRDIQAVLTIADTDHLMADLPWAAESIALRNVYTDPLNVLQAELLYRSRHQEQPDANVEQALMVTIAGVAAGMRNTG</sequence>
<organism>
    <name type="scientific">Edwardsiella ictaluri (strain 93-146)</name>
    <dbReference type="NCBI Taxonomy" id="634503"/>
    <lineage>
        <taxon>Bacteria</taxon>
        <taxon>Pseudomonadati</taxon>
        <taxon>Pseudomonadota</taxon>
        <taxon>Gammaproteobacteria</taxon>
        <taxon>Enterobacterales</taxon>
        <taxon>Hafniaceae</taxon>
        <taxon>Edwardsiella</taxon>
    </lineage>
</organism>
<dbReference type="EC" id="4.1.1.31" evidence="1"/>
<dbReference type="EMBL" id="CP001600">
    <property type="protein sequence ID" value="ACR70969.1"/>
    <property type="molecule type" value="Genomic_DNA"/>
</dbReference>
<dbReference type="RefSeq" id="WP_015873000.1">
    <property type="nucleotide sequence ID" value="NZ_CP169062.1"/>
</dbReference>
<dbReference type="SMR" id="C5BC63"/>
<dbReference type="STRING" id="67780.B6E78_10810"/>
<dbReference type="GeneID" id="69540673"/>
<dbReference type="KEGG" id="eic:NT01EI_3850"/>
<dbReference type="PATRIC" id="fig|634503.3.peg.3435"/>
<dbReference type="HOGENOM" id="CLU_006557_2_0_6"/>
<dbReference type="OrthoDB" id="9768133at2"/>
<dbReference type="Proteomes" id="UP000001485">
    <property type="component" value="Chromosome"/>
</dbReference>
<dbReference type="GO" id="GO:0005829">
    <property type="term" value="C:cytosol"/>
    <property type="evidence" value="ECO:0007669"/>
    <property type="project" value="TreeGrafter"/>
</dbReference>
<dbReference type="GO" id="GO:0000287">
    <property type="term" value="F:magnesium ion binding"/>
    <property type="evidence" value="ECO:0007669"/>
    <property type="project" value="UniProtKB-UniRule"/>
</dbReference>
<dbReference type="GO" id="GO:0008964">
    <property type="term" value="F:phosphoenolpyruvate carboxylase activity"/>
    <property type="evidence" value="ECO:0007669"/>
    <property type="project" value="UniProtKB-UniRule"/>
</dbReference>
<dbReference type="GO" id="GO:0015977">
    <property type="term" value="P:carbon fixation"/>
    <property type="evidence" value="ECO:0007669"/>
    <property type="project" value="UniProtKB-UniRule"/>
</dbReference>
<dbReference type="GO" id="GO:0006107">
    <property type="term" value="P:oxaloacetate metabolic process"/>
    <property type="evidence" value="ECO:0007669"/>
    <property type="project" value="UniProtKB-UniRule"/>
</dbReference>
<dbReference type="GO" id="GO:0006099">
    <property type="term" value="P:tricarboxylic acid cycle"/>
    <property type="evidence" value="ECO:0007669"/>
    <property type="project" value="InterPro"/>
</dbReference>
<dbReference type="FunFam" id="1.20.1440.90:FF:000002">
    <property type="entry name" value="Phosphoenolpyruvate carboxylase"/>
    <property type="match status" value="1"/>
</dbReference>
<dbReference type="Gene3D" id="1.20.1440.90">
    <property type="entry name" value="Phosphoenolpyruvate/pyruvate domain"/>
    <property type="match status" value="1"/>
</dbReference>
<dbReference type="HAMAP" id="MF_00595">
    <property type="entry name" value="PEPcase_type1"/>
    <property type="match status" value="1"/>
</dbReference>
<dbReference type="InterPro" id="IPR021135">
    <property type="entry name" value="PEP_COase"/>
</dbReference>
<dbReference type="InterPro" id="IPR022805">
    <property type="entry name" value="PEP_COase_bac/pln-type"/>
</dbReference>
<dbReference type="InterPro" id="IPR018129">
    <property type="entry name" value="PEP_COase_Lys_AS"/>
</dbReference>
<dbReference type="InterPro" id="IPR033129">
    <property type="entry name" value="PEPCASE_His_AS"/>
</dbReference>
<dbReference type="InterPro" id="IPR015813">
    <property type="entry name" value="Pyrv/PenolPyrv_kinase-like_dom"/>
</dbReference>
<dbReference type="NCBIfam" id="NF000584">
    <property type="entry name" value="PRK00009.1"/>
    <property type="match status" value="1"/>
</dbReference>
<dbReference type="PANTHER" id="PTHR30523">
    <property type="entry name" value="PHOSPHOENOLPYRUVATE CARBOXYLASE"/>
    <property type="match status" value="1"/>
</dbReference>
<dbReference type="PANTHER" id="PTHR30523:SF6">
    <property type="entry name" value="PHOSPHOENOLPYRUVATE CARBOXYLASE"/>
    <property type="match status" value="1"/>
</dbReference>
<dbReference type="Pfam" id="PF00311">
    <property type="entry name" value="PEPcase"/>
    <property type="match status" value="1"/>
</dbReference>
<dbReference type="PRINTS" id="PR00150">
    <property type="entry name" value="PEPCARBXLASE"/>
</dbReference>
<dbReference type="SUPFAM" id="SSF51621">
    <property type="entry name" value="Phosphoenolpyruvate/pyruvate domain"/>
    <property type="match status" value="1"/>
</dbReference>
<dbReference type="PROSITE" id="PS00781">
    <property type="entry name" value="PEPCASE_1"/>
    <property type="match status" value="1"/>
</dbReference>
<dbReference type="PROSITE" id="PS00393">
    <property type="entry name" value="PEPCASE_2"/>
    <property type="match status" value="1"/>
</dbReference>
<evidence type="ECO:0000255" key="1">
    <source>
        <dbReference type="HAMAP-Rule" id="MF_00595"/>
    </source>
</evidence>